<dbReference type="EMBL" id="FO080380">
    <property type="protein sequence ID" value="CCD63317.1"/>
    <property type="molecule type" value="Genomic_DNA"/>
</dbReference>
<dbReference type="PIR" id="S44753">
    <property type="entry name" value="S44753"/>
</dbReference>
<dbReference type="RefSeq" id="NP_498897.1">
    <property type="nucleotide sequence ID" value="NM_066496.5"/>
</dbReference>
<dbReference type="BioGRID" id="41412">
    <property type="interactions" value="2"/>
</dbReference>
<dbReference type="FunCoup" id="P34327">
    <property type="interactions" value="255"/>
</dbReference>
<dbReference type="IntAct" id="P34327">
    <property type="interactions" value="1"/>
</dbReference>
<dbReference type="STRING" id="6239.C13G5.2.1"/>
<dbReference type="PaxDb" id="6239-C13G5.2"/>
<dbReference type="PeptideAtlas" id="P34327"/>
<dbReference type="EnsemblMetazoa" id="C13G5.2.1">
    <property type="protein sequence ID" value="C13G5.2.1"/>
    <property type="gene ID" value="WBGene00015747"/>
</dbReference>
<dbReference type="GeneID" id="176208"/>
<dbReference type="KEGG" id="cel:CELE_C13G5.2"/>
<dbReference type="UCSC" id="C13G5.2">
    <property type="organism name" value="c. elegans"/>
</dbReference>
<dbReference type="AGR" id="WB:WBGene00015747"/>
<dbReference type="CTD" id="176208"/>
<dbReference type="WormBase" id="C13G5.2">
    <property type="protein sequence ID" value="CE29086"/>
    <property type="gene ID" value="WBGene00015747"/>
</dbReference>
<dbReference type="eggNOG" id="ENOG502T365">
    <property type="taxonomic scope" value="Eukaryota"/>
</dbReference>
<dbReference type="GeneTree" id="ENSGT00940000172600"/>
<dbReference type="HOGENOM" id="CLU_931350_0_0_1"/>
<dbReference type="InParanoid" id="P34327"/>
<dbReference type="OMA" id="DFHHINI"/>
<dbReference type="OrthoDB" id="5870415at2759"/>
<dbReference type="PRO" id="PR:P34327"/>
<dbReference type="Proteomes" id="UP000001940">
    <property type="component" value="Chromosome III"/>
</dbReference>
<dbReference type="Bgee" id="WBGene00015747">
    <property type="expression patterns" value="Expressed in germ line (C elegans) and 4 other cell types or tissues"/>
</dbReference>
<dbReference type="PANTHER" id="PTHR21525:SF9">
    <property type="entry name" value="CHANNEL_COLICIN DOMAIN-CONTAINING PROTEIN"/>
    <property type="match status" value="1"/>
</dbReference>
<dbReference type="PANTHER" id="PTHR21525">
    <property type="entry name" value="MOTILE SPERM PROTEIN"/>
    <property type="match status" value="1"/>
</dbReference>
<keyword id="KW-1185">Reference proteome</keyword>
<name>YKX2_CAEEL</name>
<gene>
    <name type="ORF">C13G5.2</name>
</gene>
<feature type="chain" id="PRO_0000065176" description="Uncharacterized protein C13G5.2">
    <location>
        <begin position="1"/>
        <end position="351"/>
    </location>
</feature>
<organism>
    <name type="scientific">Caenorhabditis elegans</name>
    <dbReference type="NCBI Taxonomy" id="6239"/>
    <lineage>
        <taxon>Eukaryota</taxon>
        <taxon>Metazoa</taxon>
        <taxon>Ecdysozoa</taxon>
        <taxon>Nematoda</taxon>
        <taxon>Chromadorea</taxon>
        <taxon>Rhabditida</taxon>
        <taxon>Rhabditina</taxon>
        <taxon>Rhabditomorpha</taxon>
        <taxon>Rhabditoidea</taxon>
        <taxon>Rhabditidae</taxon>
        <taxon>Peloderinae</taxon>
        <taxon>Caenorhabditis</taxon>
    </lineage>
</organism>
<accession>P34327</accession>
<reference key="1">
    <citation type="journal article" date="1994" name="Nature">
        <title>2.2 Mb of contiguous nucleotide sequence from chromosome III of C. elegans.</title>
        <authorList>
            <person name="Wilson R."/>
            <person name="Ainscough R."/>
            <person name="Anderson K."/>
            <person name="Baynes C."/>
            <person name="Berks M."/>
            <person name="Bonfield J."/>
            <person name="Burton J."/>
            <person name="Connell M."/>
            <person name="Copsey T."/>
            <person name="Cooper J."/>
            <person name="Coulson A."/>
            <person name="Craxton M."/>
            <person name="Dear S."/>
            <person name="Du Z."/>
            <person name="Durbin R."/>
            <person name="Favello A."/>
            <person name="Fraser A."/>
            <person name="Fulton L."/>
            <person name="Gardner A."/>
            <person name="Green P."/>
            <person name="Hawkins T."/>
            <person name="Hillier L."/>
            <person name="Jier M."/>
            <person name="Johnston L."/>
            <person name="Jones M."/>
            <person name="Kershaw J."/>
            <person name="Kirsten J."/>
            <person name="Laisster N."/>
            <person name="Latreille P."/>
            <person name="Lightning J."/>
            <person name="Lloyd C."/>
            <person name="Mortimore B."/>
            <person name="O'Callaghan M."/>
            <person name="Parsons J."/>
            <person name="Percy C."/>
            <person name="Rifken L."/>
            <person name="Roopra A."/>
            <person name="Saunders D."/>
            <person name="Shownkeen R."/>
            <person name="Sims M."/>
            <person name="Smaldon N."/>
            <person name="Smith A."/>
            <person name="Smith M."/>
            <person name="Sonnhammer E."/>
            <person name="Staden R."/>
            <person name="Sulston J."/>
            <person name="Thierry-Mieg J."/>
            <person name="Thomas K."/>
            <person name="Vaudin M."/>
            <person name="Vaughan K."/>
            <person name="Waterston R."/>
            <person name="Watson A."/>
            <person name="Weinstock L."/>
            <person name="Wilkinson-Sproat J."/>
            <person name="Wohldman P."/>
        </authorList>
    </citation>
    <scope>NUCLEOTIDE SEQUENCE [LARGE SCALE GENOMIC DNA]</scope>
    <source>
        <strain>Bristol N2</strain>
    </source>
</reference>
<reference key="2">
    <citation type="journal article" date="1998" name="Science">
        <title>Genome sequence of the nematode C. elegans: a platform for investigating biology.</title>
        <authorList>
            <consortium name="The C. elegans sequencing consortium"/>
        </authorList>
    </citation>
    <scope>NUCLEOTIDE SEQUENCE [LARGE SCALE GENOMIC DNA]</scope>
    <source>
        <strain>Bristol N2</strain>
    </source>
</reference>
<sequence length="351" mass="37903">MSSDEQKPEVNGYWTSVKNFSSSAATSINNATTSAWNSEFAASTSATVKDFSTSATKSIGEAATSAWNSETASTATSAISEAAKNARSWYDSSSEENEELEPSGHGFRGGIAALSRNASHYVISTVGRSSNILNIFDKTNKSSLGNPRWWIRFDRPHGNVDFHHININKAVTGLKDPHIPLTPTTAKTIGVLGKVAEKANDVAPLLTTAAMIYEAYRVGQEVHKDMNHGTTRNTIKTLAATSGTYSSGSIGAYAGSVIGTSIFPGLGTIFGAVVGGIVGGHFGGHYSHVATENALNHVKWDVVTFVCDGCDEEYTWKKYQEIEGTCCTRFNNKRQDSVDYWFKKLETNHDF</sequence>
<protein>
    <recommendedName>
        <fullName>Uncharacterized protein C13G5.2</fullName>
    </recommendedName>
</protein>
<proteinExistence type="predicted"/>